<sequence>MSSRKQGSQPRGQQSAEEENFKKPTRSNMQRSKMRGASSGKKTAGPQQKNLEPALPGRWGGRSAENPPSGSVRKTRKNKQKTPGNGDGGSTSEAPQPPRKKRARADPTVESEEAFKNRMEVKVKIPEELKPWLVEDWDLVTRQKQLFQLPAKKNVDAILEEYANCKKSQGNVDNKEYAVNEVVAGIKEYFNVMLGTQLLYKFERPQYAEILLAHPDAPMSQVYGAPHLLRLFVRIGAMLAYTPLDEKSLALLLGYLHDFLKYLAKNSASLFTASDYKVASAEYHRKAL</sequence>
<organism>
    <name type="scientific">Homo sapiens</name>
    <name type="common">Human</name>
    <dbReference type="NCBI Taxonomy" id="9606"/>
    <lineage>
        <taxon>Eukaryota</taxon>
        <taxon>Metazoa</taxon>
        <taxon>Chordata</taxon>
        <taxon>Craniata</taxon>
        <taxon>Vertebrata</taxon>
        <taxon>Euteleostomi</taxon>
        <taxon>Mammalia</taxon>
        <taxon>Eutheria</taxon>
        <taxon>Euarchontoglires</taxon>
        <taxon>Primates</taxon>
        <taxon>Haplorrhini</taxon>
        <taxon>Catarrhini</taxon>
        <taxon>Hominidae</taxon>
        <taxon>Homo</taxon>
    </lineage>
</organism>
<accession>Q15014</accession>
<accession>B3KP92</accession>
<accession>D3DXA5</accession>
<accession>Q567V0</accession>
<accession>Q8J026</accession>
<feature type="chain" id="PRO_0000088768" description="Mortality factor 4-like protein 2">
    <location>
        <begin position="1"/>
        <end position="288"/>
    </location>
</feature>
<feature type="domain" description="MRG" evidence="1">
    <location>
        <begin position="117"/>
        <end position="288"/>
    </location>
</feature>
<feature type="region of interest" description="Disordered" evidence="2">
    <location>
        <begin position="1"/>
        <end position="113"/>
    </location>
</feature>
<feature type="compositionally biased region" description="Polar residues" evidence="2">
    <location>
        <begin position="1"/>
        <end position="15"/>
    </location>
</feature>
<feature type="modified residue" description="Phosphoserine" evidence="6 7">
    <location>
        <position position="71"/>
    </location>
</feature>
<feature type="mutagenesis site" description="Abrogates both transcriptional activation and repression by MORF4L2." evidence="5">
    <location>
        <begin position="132"/>
        <end position="136"/>
    </location>
</feature>
<feature type="mutagenesis site" description="Abrogates both transcriptional activation and repression by MORF4L2." evidence="5">
    <original>L</original>
    <variation>A</variation>
    <location>
        <position position="263"/>
    </location>
</feature>
<dbReference type="EMBL" id="AF100620">
    <property type="protein sequence ID" value="AAD29873.1"/>
    <property type="molecule type" value="mRNA"/>
</dbReference>
<dbReference type="EMBL" id="AF167174">
    <property type="protein sequence ID" value="AAF80855.1"/>
    <property type="molecule type" value="mRNA"/>
</dbReference>
<dbReference type="EMBL" id="D14812">
    <property type="protein sequence ID" value="BAA03553.1"/>
    <property type="molecule type" value="mRNA"/>
</dbReference>
<dbReference type="EMBL" id="AK056012">
    <property type="protein sequence ID" value="BAG51604.1"/>
    <property type="molecule type" value="mRNA"/>
</dbReference>
<dbReference type="EMBL" id="AL049610">
    <property type="status" value="NOT_ANNOTATED_CDS"/>
    <property type="molecule type" value="Genomic_DNA"/>
</dbReference>
<dbReference type="EMBL" id="CH471190">
    <property type="protein sequence ID" value="EAW54698.1"/>
    <property type="molecule type" value="Genomic_DNA"/>
</dbReference>
<dbReference type="EMBL" id="CH471190">
    <property type="protein sequence ID" value="EAW54699.1"/>
    <property type="molecule type" value="Genomic_DNA"/>
</dbReference>
<dbReference type="EMBL" id="CH471190">
    <property type="protein sequence ID" value="EAW54700.1"/>
    <property type="molecule type" value="Genomic_DNA"/>
</dbReference>
<dbReference type="EMBL" id="CH471190">
    <property type="protein sequence ID" value="EAW54701.1"/>
    <property type="molecule type" value="Genomic_DNA"/>
</dbReference>
<dbReference type="EMBL" id="BC056899">
    <property type="protein sequence ID" value="AAH56899.1"/>
    <property type="molecule type" value="mRNA"/>
</dbReference>
<dbReference type="EMBL" id="BC093013">
    <property type="protein sequence ID" value="AAH93013.1"/>
    <property type="molecule type" value="mRNA"/>
</dbReference>
<dbReference type="EMBL" id="AB050778">
    <property type="protein sequence ID" value="BAC22659.1"/>
    <property type="molecule type" value="mRNA"/>
</dbReference>
<dbReference type="CCDS" id="CCDS14512.1"/>
<dbReference type="RefSeq" id="NP_001135890.1">
    <property type="nucleotide sequence ID" value="NM_001142418.2"/>
</dbReference>
<dbReference type="RefSeq" id="NP_001135891.1">
    <property type="nucleotide sequence ID" value="NM_001142419.2"/>
</dbReference>
<dbReference type="RefSeq" id="NP_001135892.1">
    <property type="nucleotide sequence ID" value="NM_001142420.2"/>
</dbReference>
<dbReference type="RefSeq" id="NP_001135893.1">
    <property type="nucleotide sequence ID" value="NM_001142421.2"/>
</dbReference>
<dbReference type="RefSeq" id="NP_001135894.1">
    <property type="nucleotide sequence ID" value="NM_001142422.2"/>
</dbReference>
<dbReference type="RefSeq" id="NP_001135895.1">
    <property type="nucleotide sequence ID" value="NM_001142423.2"/>
</dbReference>
<dbReference type="RefSeq" id="NP_001135896.1">
    <property type="nucleotide sequence ID" value="NM_001142424.2"/>
</dbReference>
<dbReference type="RefSeq" id="NP_001135897.1">
    <property type="nucleotide sequence ID" value="NM_001142425.2"/>
</dbReference>
<dbReference type="RefSeq" id="NP_001135898.1">
    <property type="nucleotide sequence ID" value="NM_001142426.2"/>
</dbReference>
<dbReference type="RefSeq" id="NP_001135899.1">
    <property type="nucleotide sequence ID" value="NM_001142427.2"/>
</dbReference>
<dbReference type="RefSeq" id="NP_001135900.1">
    <property type="nucleotide sequence ID" value="NM_001142428.2"/>
</dbReference>
<dbReference type="RefSeq" id="NP_001135901.1">
    <property type="nucleotide sequence ID" value="NM_001142429.2"/>
</dbReference>
<dbReference type="RefSeq" id="NP_001135902.1">
    <property type="nucleotide sequence ID" value="NM_001142430.2"/>
</dbReference>
<dbReference type="RefSeq" id="NP_001135903.1">
    <property type="nucleotide sequence ID" value="NM_001142431.2"/>
</dbReference>
<dbReference type="RefSeq" id="NP_001135904.1">
    <property type="nucleotide sequence ID" value="NM_001142432.2"/>
</dbReference>
<dbReference type="RefSeq" id="NP_036418.1">
    <property type="nucleotide sequence ID" value="NM_012286.3"/>
</dbReference>
<dbReference type="SMR" id="Q15014"/>
<dbReference type="BioGRID" id="115001">
    <property type="interactions" value="182"/>
</dbReference>
<dbReference type="ComplexPortal" id="CPX-978">
    <property type="entry name" value="NuA4 histone acetyltransferase complex"/>
</dbReference>
<dbReference type="CORUM" id="Q15014"/>
<dbReference type="FunCoup" id="Q15014">
    <property type="interactions" value="1499"/>
</dbReference>
<dbReference type="IntAct" id="Q15014">
    <property type="interactions" value="108"/>
</dbReference>
<dbReference type="MINT" id="Q15014"/>
<dbReference type="STRING" id="9606.ENSP00000394417"/>
<dbReference type="GlyGen" id="Q15014">
    <property type="glycosylation" value="1 site, 1 O-linked glycan (1 site)"/>
</dbReference>
<dbReference type="iPTMnet" id="Q15014"/>
<dbReference type="MetOSite" id="Q15014"/>
<dbReference type="PhosphoSitePlus" id="Q15014"/>
<dbReference type="BioMuta" id="MORF4L2"/>
<dbReference type="DMDM" id="3123049"/>
<dbReference type="jPOST" id="Q15014"/>
<dbReference type="MassIVE" id="Q15014"/>
<dbReference type="PaxDb" id="9606-ENSP00000394417"/>
<dbReference type="PeptideAtlas" id="Q15014"/>
<dbReference type="ProteomicsDB" id="60366"/>
<dbReference type="Pumba" id="Q15014"/>
<dbReference type="Antibodypedia" id="14953">
    <property type="antibodies" value="161 antibodies from 30 providers"/>
</dbReference>
<dbReference type="DNASU" id="9643"/>
<dbReference type="Ensembl" id="ENST00000360458.5">
    <property type="protein sequence ID" value="ENSP00000353643.1"/>
    <property type="gene ID" value="ENSG00000123562.18"/>
</dbReference>
<dbReference type="Ensembl" id="ENST00000433176.6">
    <property type="protein sequence ID" value="ENSP00000415476.2"/>
    <property type="gene ID" value="ENSG00000123562.18"/>
</dbReference>
<dbReference type="Ensembl" id="ENST00000441076.7">
    <property type="protein sequence ID" value="ENSP00000391969.2"/>
    <property type="gene ID" value="ENSG00000123562.18"/>
</dbReference>
<dbReference type="Ensembl" id="ENST00000451301.5">
    <property type="protein sequence ID" value="ENSP00000410532.1"/>
    <property type="gene ID" value="ENSG00000123562.18"/>
</dbReference>
<dbReference type="GeneID" id="9643"/>
<dbReference type="KEGG" id="hsa:9643"/>
<dbReference type="MANE-Select" id="ENST00000441076.7">
    <property type="protein sequence ID" value="ENSP00000391969.2"/>
    <property type="RefSeq nucleotide sequence ID" value="NM_012286.3"/>
    <property type="RefSeq protein sequence ID" value="NP_036418.1"/>
</dbReference>
<dbReference type="UCSC" id="uc004ekx.4">
    <property type="organism name" value="human"/>
</dbReference>
<dbReference type="AGR" id="HGNC:16849"/>
<dbReference type="CTD" id="9643"/>
<dbReference type="DisGeNET" id="9643"/>
<dbReference type="GeneCards" id="MORF4L2"/>
<dbReference type="HGNC" id="HGNC:16849">
    <property type="gene designation" value="MORF4L2"/>
</dbReference>
<dbReference type="HPA" id="ENSG00000123562">
    <property type="expression patterns" value="Low tissue specificity"/>
</dbReference>
<dbReference type="MIM" id="300409">
    <property type="type" value="gene"/>
</dbReference>
<dbReference type="neXtProt" id="NX_Q15014"/>
<dbReference type="OpenTargets" id="ENSG00000123562"/>
<dbReference type="PharmGKB" id="PA134925837"/>
<dbReference type="VEuPathDB" id="HostDB:ENSG00000123562"/>
<dbReference type="eggNOG" id="KOG3001">
    <property type="taxonomic scope" value="Eukaryota"/>
</dbReference>
<dbReference type="GeneTree" id="ENSGT00950000182965"/>
<dbReference type="InParanoid" id="Q15014"/>
<dbReference type="OMA" id="PTRGNMQ"/>
<dbReference type="OrthoDB" id="124855at2759"/>
<dbReference type="PAN-GO" id="Q15014">
    <property type="GO annotations" value="4 GO annotations based on evolutionary models"/>
</dbReference>
<dbReference type="PhylomeDB" id="Q15014"/>
<dbReference type="TreeFam" id="TF323400"/>
<dbReference type="PathwayCommons" id="Q15014"/>
<dbReference type="Reactome" id="R-HSA-3214847">
    <property type="pathway name" value="HATs acetylate histones"/>
</dbReference>
<dbReference type="SignaLink" id="Q15014"/>
<dbReference type="SIGNOR" id="Q15014"/>
<dbReference type="BioGRID-ORCS" id="9643">
    <property type="hits" value="23 hits in 792 CRISPR screens"/>
</dbReference>
<dbReference type="ChiTaRS" id="MORF4L2">
    <property type="organism name" value="human"/>
</dbReference>
<dbReference type="GeneWiki" id="MORF4L2"/>
<dbReference type="GenomeRNAi" id="9643"/>
<dbReference type="Pharos" id="Q15014">
    <property type="development level" value="Tbio"/>
</dbReference>
<dbReference type="PRO" id="PR:Q15014"/>
<dbReference type="Proteomes" id="UP000005640">
    <property type="component" value="Chromosome X"/>
</dbReference>
<dbReference type="RNAct" id="Q15014">
    <property type="molecule type" value="protein"/>
</dbReference>
<dbReference type="Bgee" id="ENSG00000123562">
    <property type="expression patterns" value="Expressed in endothelial cell and 216 other cell types or tissues"/>
</dbReference>
<dbReference type="ExpressionAtlas" id="Q15014">
    <property type="expression patterns" value="baseline and differential"/>
</dbReference>
<dbReference type="GO" id="GO:0035267">
    <property type="term" value="C:NuA4 histone acetyltransferase complex"/>
    <property type="evidence" value="ECO:0000314"/>
    <property type="project" value="ComplexPortal"/>
</dbReference>
<dbReference type="GO" id="GO:0005730">
    <property type="term" value="C:nucleolus"/>
    <property type="evidence" value="ECO:0000314"/>
    <property type="project" value="UniProtKB"/>
</dbReference>
<dbReference type="GO" id="GO:0005654">
    <property type="term" value="C:nucleoplasm"/>
    <property type="evidence" value="ECO:0000314"/>
    <property type="project" value="HPA"/>
</dbReference>
<dbReference type="GO" id="GO:0000786">
    <property type="term" value="C:nucleosome"/>
    <property type="evidence" value="ECO:0000314"/>
    <property type="project" value="ComplexPortal"/>
</dbReference>
<dbReference type="GO" id="GO:0005886">
    <property type="term" value="C:plasma membrane"/>
    <property type="evidence" value="ECO:0000314"/>
    <property type="project" value="HPA"/>
</dbReference>
<dbReference type="GO" id="GO:0006325">
    <property type="term" value="P:chromatin organization"/>
    <property type="evidence" value="ECO:0007669"/>
    <property type="project" value="UniProtKB-KW"/>
</dbReference>
<dbReference type="GO" id="GO:0006281">
    <property type="term" value="P:DNA repair"/>
    <property type="evidence" value="ECO:0007669"/>
    <property type="project" value="UniProtKB-KW"/>
</dbReference>
<dbReference type="GO" id="GO:0045893">
    <property type="term" value="P:positive regulation of DNA-templated transcription"/>
    <property type="evidence" value="ECO:0000303"/>
    <property type="project" value="ComplexPortal"/>
</dbReference>
<dbReference type="GO" id="GO:1905168">
    <property type="term" value="P:positive regulation of double-strand break repair via homologous recombination"/>
    <property type="evidence" value="ECO:0000314"/>
    <property type="project" value="ComplexPortal"/>
</dbReference>
<dbReference type="GO" id="GO:0042981">
    <property type="term" value="P:regulation of apoptotic process"/>
    <property type="evidence" value="ECO:0000303"/>
    <property type="project" value="ComplexPortal"/>
</dbReference>
<dbReference type="GO" id="GO:0051726">
    <property type="term" value="P:regulation of cell cycle"/>
    <property type="evidence" value="ECO:0000315"/>
    <property type="project" value="ComplexPortal"/>
</dbReference>
<dbReference type="GO" id="GO:2000779">
    <property type="term" value="P:regulation of double-strand break repair"/>
    <property type="evidence" value="ECO:0000303"/>
    <property type="project" value="ComplexPortal"/>
</dbReference>
<dbReference type="FunFam" id="1.10.274.30:FF:000001">
    <property type="entry name" value="Mortality factor 4-like protein 1"/>
    <property type="match status" value="1"/>
</dbReference>
<dbReference type="Gene3D" id="1.10.274.30">
    <property type="entry name" value="MRG domain"/>
    <property type="match status" value="1"/>
</dbReference>
<dbReference type="InterPro" id="IPR008676">
    <property type="entry name" value="MRG"/>
</dbReference>
<dbReference type="InterPro" id="IPR038217">
    <property type="entry name" value="MRG_C_sf"/>
</dbReference>
<dbReference type="InterPro" id="IPR026541">
    <property type="entry name" value="MRG_dom"/>
</dbReference>
<dbReference type="PANTHER" id="PTHR10880">
    <property type="entry name" value="MORTALITY FACTOR 4-LIKE PROTEIN"/>
    <property type="match status" value="1"/>
</dbReference>
<dbReference type="PANTHER" id="PTHR10880:SF25">
    <property type="entry name" value="MORTALITY FACTOR 4-LIKE PROTEIN 2"/>
    <property type="match status" value="1"/>
</dbReference>
<dbReference type="Pfam" id="PF05712">
    <property type="entry name" value="MRG"/>
    <property type="match status" value="1"/>
</dbReference>
<dbReference type="PROSITE" id="PS51640">
    <property type="entry name" value="MRG"/>
    <property type="match status" value="1"/>
</dbReference>
<comment type="function">
    <text>Component of the NuA4 histone acetyltransferase complex which is involved in transcriptional activation of select genes principally by acetylation of nucleosomal histone H4 and H2A. This modification may both alter nucleosome - DNA interactions and promote interaction of the modified histones with other proteins which positively regulate transcription. This complex may be required for the activation of transcriptional programs associated with oncogene and proto-oncogene mediated growth induction, tumor suppressor mediated growth arrest and replicative senescence, apoptosis, and DNA repair. The NuA4 complex ATPase and helicase activities seem to be, at least in part, contributed by the association of RUVBL1 and RUVBL2 with EP400. NuA4 may also play a direct role in DNA repair when directly recruited to sites of DNA damage. Also a component of the MSIN3A complex which acts to repress transcription by deacetylation of nucleosomal histones.</text>
</comment>
<comment type="subunit">
    <text evidence="3 4 5">Component of the NuA4 histone acetyltransferase complex which contains the catalytic subunit KAT5/TIP60 and the subunits EP400, TRRAP/PAF400, BRD8/SMAP, EPC1, DMAP1/DNMAP1, RUVBL1/TIP49, RUVBL2, ING3, actin, ACTL6A/BAF53A, MORF4L1/MRG15, MORF4L2/MRGX, MRGBP, YEATS4/GAS41 and VPS72/YL1. The NuA4 complex interacts with MYC and the adenovirus E1A protein. MORF4L1 may also participate in the formation of NuA4 related complexes which lack the KAT5/TIP60 catalytic subunit, but which include the SWI/SNF related protein SRCAP. Component of the MSIN3A histone deacetylase complex, which includes SIN3A, HDAC2, ARID4B, MORF4L1, RBBP4/RbAp48, and RBBP7/RbAp46. Interacts with MRFAP1 and RB1. May also interact with one or more as yet undefined members of the TLE (transducin-like enhancer of split) family of transcriptional repressors.</text>
</comment>
<comment type="interaction">
    <interactant intactId="EBI-399257">
        <id>Q15014</id>
    </interactant>
    <interactant intactId="EBI-746752">
        <id>Q9Y2J4</id>
        <label>AMOTL2</label>
    </interactant>
    <organismsDiffer>false</organismsDiffer>
    <experiments>3</experiments>
</comment>
<comment type="interaction">
    <interactant intactId="EBI-399257">
        <id>Q15014</id>
    </interactant>
    <interactant intactId="EBI-5458244">
        <id>Q99856</id>
        <label>ARID3A</label>
    </interactant>
    <organismsDiffer>false</organismsDiffer>
    <experiments>3</experiments>
</comment>
<comment type="interaction">
    <interactant intactId="EBI-399257">
        <id>Q15014</id>
    </interactant>
    <interactant intactId="EBI-10183342">
        <id>Q9H165-2</id>
        <label>BCL11A</label>
    </interactant>
    <organismsDiffer>false</organismsDiffer>
    <experiments>3</experiments>
</comment>
<comment type="interaction">
    <interactant intactId="EBI-399257">
        <id>Q15014</id>
    </interactant>
    <interactant intactId="EBI-10181188">
        <id>Q8N7W2-2</id>
        <label>BEND7</label>
    </interactant>
    <organismsDiffer>false</organismsDiffer>
    <experiments>3</experiments>
</comment>
<comment type="interaction">
    <interactant intactId="EBI-399257">
        <id>Q15014</id>
    </interactant>
    <interactant intactId="EBI-10243741">
        <id>Q5H9J7</id>
        <label>BEX5</label>
    </interactant>
    <organismsDiffer>false</organismsDiffer>
    <experiments>3</experiments>
</comment>
<comment type="interaction">
    <interactant intactId="EBI-399257">
        <id>Q15014</id>
    </interactant>
    <interactant intactId="EBI-11523526">
        <id>Q13554-3</id>
        <label>CAMK2B</label>
    </interactant>
    <organismsDiffer>false</organismsDiffer>
    <experiments>3</experiments>
</comment>
<comment type="interaction">
    <interactant intactId="EBI-399257">
        <id>Q15014</id>
    </interactant>
    <interactant intactId="EBI-1181367">
        <id>Q01850</id>
        <label>CDR2</label>
    </interactant>
    <organismsDiffer>false</organismsDiffer>
    <experiments>6</experiments>
</comment>
<comment type="interaction">
    <interactant intactId="EBI-399257">
        <id>Q15014</id>
    </interactant>
    <interactant intactId="EBI-747776">
        <id>Q53EZ4</id>
        <label>CEP55</label>
    </interactant>
    <organismsDiffer>false</organismsDiffer>
    <experiments>6</experiments>
</comment>
<comment type="interaction">
    <interactant intactId="EBI-399257">
        <id>Q15014</id>
    </interactant>
    <interactant intactId="EBI-742054">
        <id>Q96D03</id>
        <label>DDIT4L</label>
    </interactant>
    <organismsDiffer>false</organismsDiffer>
    <experiments>6</experiments>
</comment>
<comment type="interaction">
    <interactant intactId="EBI-399257">
        <id>Q15014</id>
    </interactant>
    <interactant intactId="EBI-11988027">
        <id>Q9NRI5-2</id>
        <label>DISC1</label>
    </interactant>
    <organismsDiffer>false</organismsDiffer>
    <experiments>3</experiments>
</comment>
<comment type="interaction">
    <interactant intactId="EBI-399257">
        <id>Q15014</id>
    </interactant>
    <interactant intactId="EBI-9355720">
        <id>Q6ZTU2</id>
        <label>EP400P1</label>
    </interactant>
    <organismsDiffer>false</organismsDiffer>
    <experiments>3</experiments>
</comment>
<comment type="interaction">
    <interactant intactId="EBI-399257">
        <id>Q15014</id>
    </interactant>
    <interactant intactId="EBI-852291">
        <id>O60447</id>
        <label>EVI5</label>
    </interactant>
    <organismsDiffer>false</organismsDiffer>
    <experiments>3</experiments>
</comment>
<comment type="interaction">
    <interactant intactId="EBI-399257">
        <id>Q15014</id>
    </interactant>
    <interactant intactId="EBI-10175124">
        <id>Q8IZU0</id>
        <label>FAM9B</label>
    </interactant>
    <organismsDiffer>false</organismsDiffer>
    <experiments>3</experiments>
</comment>
<comment type="interaction">
    <interactant intactId="EBI-399257">
        <id>Q15014</id>
    </interactant>
    <interactant intactId="EBI-12063229">
        <id>Q8IX29</id>
        <label>FBXO16</label>
    </interactant>
    <organismsDiffer>false</organismsDiffer>
    <experiments>3</experiments>
</comment>
<comment type="interaction">
    <interactant intactId="EBI-399257">
        <id>Q15014</id>
    </interactant>
    <interactant intactId="EBI-618309">
        <id>Q08379</id>
        <label>GOLGA2</label>
    </interactant>
    <organismsDiffer>false</organismsDiffer>
    <experiments>3</experiments>
</comment>
<comment type="interaction">
    <interactant intactId="EBI-399257">
        <id>Q15014</id>
    </interactant>
    <interactant intactId="EBI-2349758">
        <id>Q86WP2</id>
        <label>GPBP1</label>
    </interactant>
    <organismsDiffer>false</organismsDiffer>
    <experiments>3</experiments>
</comment>
<comment type="interaction">
    <interactant intactId="EBI-399257">
        <id>Q15014</id>
    </interactant>
    <interactant intactId="EBI-2832937">
        <id>Q96HH9</id>
        <label>GRAMD2B</label>
    </interactant>
    <organismsDiffer>false</organismsDiffer>
    <experiments>3</experiments>
</comment>
<comment type="interaction">
    <interactant intactId="EBI-399257">
        <id>Q15014</id>
    </interactant>
    <interactant intactId="EBI-2549423">
        <id>Q6NT76</id>
        <label>HMBOX1</label>
    </interactant>
    <organismsDiffer>false</organismsDiffer>
    <experiments>3</experiments>
</comment>
<comment type="interaction">
    <interactant intactId="EBI-399257">
        <id>Q15014</id>
    </interactant>
    <interactant intactId="EBI-466029">
        <id>P42858</id>
        <label>HTT</label>
    </interactant>
    <organismsDiffer>false</organismsDiffer>
    <experiments>12</experiments>
</comment>
<comment type="interaction">
    <interactant intactId="EBI-399257">
        <id>Q15014</id>
    </interactant>
    <interactant intactId="EBI-745305">
        <id>Q13422</id>
        <label>IKZF1</label>
    </interactant>
    <organismsDiffer>false</organismsDiffer>
    <experiments>3</experiments>
</comment>
<comment type="interaction">
    <interactant intactId="EBI-399257">
        <id>Q15014</id>
    </interactant>
    <interactant intactId="EBI-9027502">
        <id>Q719H9</id>
        <label>KCTD1</label>
    </interactant>
    <organismsDiffer>false</organismsDiffer>
    <experiments>3</experiments>
</comment>
<comment type="interaction">
    <interactant intactId="EBI-399257">
        <id>Q15014</id>
    </interactant>
    <interactant intactId="EBI-10230467">
        <id>Q8N4I8</id>
        <label>KLHL3</label>
    </interactant>
    <organismsDiffer>false</organismsDiffer>
    <experiments>3</experiments>
</comment>
<comment type="interaction">
    <interactant intactId="EBI-399257">
        <id>Q15014</id>
    </interactant>
    <interactant intactId="EBI-2686809">
        <id>Q96JM7</id>
        <label>L3MBTL3</label>
    </interactant>
    <organismsDiffer>false</organismsDiffer>
    <experiments>3</experiments>
</comment>
<comment type="interaction">
    <interactant intactId="EBI-399257">
        <id>Q15014</id>
    </interactant>
    <interactant intactId="EBI-11985629">
        <id>Q96JM7-2</id>
        <label>L3MBTL3</label>
    </interactant>
    <organismsDiffer>false</organismsDiffer>
    <experiments>3</experiments>
</comment>
<comment type="interaction">
    <interactant intactId="EBI-399257">
        <id>Q15014</id>
    </interactant>
    <interactant intactId="EBI-10198848">
        <id>Q9P127</id>
        <label>LUZP4</label>
    </interactant>
    <organismsDiffer>false</organismsDiffer>
    <experiments>3</experiments>
</comment>
<comment type="interaction">
    <interactant intactId="EBI-399257">
        <id>Q15014</id>
    </interactant>
    <interactant intactId="EBI-741037">
        <id>Q9BRK4</id>
        <label>LZTS2</label>
    </interactant>
    <organismsDiffer>false</organismsDiffer>
    <experiments>3</experiments>
</comment>
<comment type="interaction">
    <interactant intactId="EBI-399257">
        <id>Q15014</id>
    </interactant>
    <interactant intactId="EBI-16439278">
        <id>Q6FHY5</id>
        <label>MEOX2</label>
    </interactant>
    <organismsDiffer>false</organismsDiffer>
    <experiments>3</experiments>
</comment>
<comment type="interaction">
    <interactant intactId="EBI-399257">
        <id>Q15014</id>
    </interactant>
    <interactant intactId="EBI-995714">
        <id>Q9Y605</id>
        <label>MRFAP1</label>
    </interactant>
    <organismsDiffer>false</organismsDiffer>
    <experiments>18</experiments>
</comment>
<comment type="interaction">
    <interactant intactId="EBI-399257">
        <id>Q15014</id>
    </interactant>
    <interactant intactId="EBI-748896">
        <id>Q96HT8</id>
        <label>MRFAP1L1</label>
    </interactant>
    <organismsDiffer>false</organismsDiffer>
    <experiments>14</experiments>
</comment>
<comment type="interaction">
    <interactant intactId="EBI-399257">
        <id>Q15014</id>
    </interactant>
    <interactant intactId="EBI-399076">
        <id>Q9NV56</id>
        <label>MRGBP</label>
    </interactant>
    <organismsDiffer>false</organismsDiffer>
    <experiments>15</experiments>
</comment>
<comment type="interaction">
    <interactant intactId="EBI-399257">
        <id>Q15014</id>
    </interactant>
    <interactant intactId="EBI-358272">
        <id>P52815</id>
        <label>MRPL12</label>
    </interactant>
    <organismsDiffer>false</organismsDiffer>
    <experiments>3</experiments>
</comment>
<comment type="interaction">
    <interactant intactId="EBI-399257">
        <id>Q15014</id>
    </interactant>
    <interactant intactId="EBI-8641936">
        <id>Q15742</id>
        <label>NAB2</label>
    </interactant>
    <organismsDiffer>false</organismsDiffer>
    <experiments>3</experiments>
</comment>
<comment type="interaction">
    <interactant intactId="EBI-399257">
        <id>Q15014</id>
    </interactant>
    <interactant intactId="EBI-713786">
        <id>Q8IXK0</id>
        <label>PHC2</label>
    </interactant>
    <organismsDiffer>false</organismsDiffer>
    <experiments>3</experiments>
</comment>
<comment type="interaction">
    <interactant intactId="EBI-399257">
        <id>Q15014</id>
    </interactant>
    <interactant intactId="EBI-14066006">
        <id>Q4G0R1</id>
        <label>PIBF1</label>
    </interactant>
    <organismsDiffer>false</organismsDiffer>
    <experiments>3</experiments>
</comment>
<comment type="interaction">
    <interactant intactId="EBI-399257">
        <id>Q15014</id>
    </interactant>
    <interactant intactId="EBI-79165">
        <id>Q9NRD5</id>
        <label>PICK1</label>
    </interactant>
    <organismsDiffer>false</organismsDiffer>
    <experiments>3</experiments>
</comment>
<comment type="interaction">
    <interactant intactId="EBI-399257">
        <id>Q15014</id>
    </interactant>
    <interactant intactId="EBI-302355">
        <id>Q9UL42</id>
        <label>PNMA2</label>
    </interactant>
    <organismsDiffer>false</organismsDiffer>
    <experiments>3</experiments>
</comment>
<comment type="interaction">
    <interactant intactId="EBI-399257">
        <id>Q15014</id>
    </interactant>
    <interactant intactId="EBI-12029004">
        <id>P78424</id>
        <label>POU6F2</label>
    </interactant>
    <organismsDiffer>false</organismsDiffer>
    <experiments>3</experiments>
</comment>
<comment type="interaction">
    <interactant intactId="EBI-399257">
        <id>Q15014</id>
    </interactant>
    <interactant intactId="EBI-10829018">
        <id>Q04864-2</id>
        <label>REL</label>
    </interactant>
    <organismsDiffer>false</organismsDiffer>
    <experiments>3</experiments>
</comment>
<comment type="interaction">
    <interactant intactId="EBI-399257">
        <id>Q15014</id>
    </interactant>
    <interactant intactId="EBI-12820047">
        <id>Q17R54</id>
        <label>SYN3</label>
    </interactant>
    <organismsDiffer>false</organismsDiffer>
    <experiments>3</experiments>
</comment>
<comment type="interaction">
    <interactant intactId="EBI-399257">
        <id>Q15014</id>
    </interactant>
    <interactant intactId="EBI-741515">
        <id>Q9NVV9</id>
        <label>THAP1</label>
    </interactant>
    <organismsDiffer>false</organismsDiffer>
    <experiments>3</experiments>
</comment>
<comment type="interaction">
    <interactant intactId="EBI-399257">
        <id>Q15014</id>
    </interactant>
    <interactant intactId="EBI-717810">
        <id>Q08117</id>
        <label>TLE5</label>
    </interactant>
    <organismsDiffer>false</organismsDiffer>
    <experiments>3</experiments>
</comment>
<comment type="interaction">
    <interactant intactId="EBI-399257">
        <id>Q15014</id>
    </interactant>
    <interactant intactId="EBI-357849">
        <id>Q15025</id>
        <label>TNIP1</label>
    </interactant>
    <organismsDiffer>false</organismsDiffer>
    <experiments>4</experiments>
</comment>
<comment type="interaction">
    <interactant intactId="EBI-399257">
        <id>Q15014</id>
    </interactant>
    <interactant intactId="EBI-8485957">
        <id>P45379</id>
        <label>TNNT2</label>
    </interactant>
    <organismsDiffer>false</organismsDiffer>
    <experiments>3</experiments>
</comment>
<comment type="interaction">
    <interactant intactId="EBI-399257">
        <id>Q15014</id>
    </interactant>
    <interactant intactId="EBI-725997">
        <id>Q8WV44</id>
        <label>TRIM41</label>
    </interactant>
    <organismsDiffer>false</organismsDiffer>
    <experiments>3</experiments>
</comment>
<comment type="interaction">
    <interactant intactId="EBI-399257">
        <id>Q15014</id>
    </interactant>
    <interactant intactId="EBI-1044160">
        <id>Q15631</id>
        <label>TSN</label>
    </interactant>
    <organismsDiffer>false</organismsDiffer>
    <experiments>3</experiments>
</comment>
<comment type="interaction">
    <interactant intactId="EBI-399257">
        <id>Q15014</id>
    </interactant>
    <interactant intactId="EBI-10235384">
        <id>Q96DT7</id>
        <label>ZBTB10</label>
    </interactant>
    <organismsDiffer>false</organismsDiffer>
    <experiments>3</experiments>
</comment>
<comment type="interaction">
    <interactant intactId="EBI-399257">
        <id>Q15014</id>
    </interactant>
    <interactant intactId="EBI-10176632">
        <id>O43829</id>
        <label>ZBTB14</label>
    </interactant>
    <organismsDiffer>false</organismsDiffer>
    <experiments>3</experiments>
</comment>
<comment type="interaction">
    <interactant intactId="EBI-399257">
        <id>Q15014</id>
    </interactant>
    <interactant intactId="EBI-3918996">
        <id>Q9HCK0</id>
        <label>ZBTB26</label>
    </interactant>
    <organismsDiffer>false</organismsDiffer>
    <experiments>3</experiments>
</comment>
<comment type="interaction">
    <interactant intactId="EBI-399257">
        <id>Q15014</id>
    </interactant>
    <interactant intactId="EBI-740718">
        <id>O43298</id>
        <label>ZBTB43</label>
    </interactant>
    <organismsDiffer>false</organismsDiffer>
    <experiments>4</experiments>
</comment>
<comment type="interaction">
    <interactant intactId="EBI-399257">
        <id>Q15014</id>
    </interactant>
    <interactant intactId="EBI-740434">
        <id>O15156</id>
        <label>ZBTB7B</label>
    </interactant>
    <organismsDiffer>false</organismsDiffer>
    <experiments>3</experiments>
</comment>
<comment type="interaction">
    <interactant intactId="EBI-399257">
        <id>Q15014</id>
    </interactant>
    <interactant intactId="EBI-12006434">
        <id>Q96MX3</id>
        <label>ZNF48</label>
    </interactant>
    <organismsDiffer>false</organismsDiffer>
    <experiments>3</experiments>
</comment>
<comment type="interaction">
    <interactant intactId="EBI-399257">
        <id>Q15014</id>
    </interactant>
    <interactant intactId="EBI-2608731">
        <id>Q77UV9</id>
        <label>KIE-2</label>
    </interactant>
    <organismsDiffer>true</organismsDiffer>
    <experiments>2</experiments>
</comment>
<comment type="interaction">
    <interactant intactId="EBI-399257">
        <id>Q15014</id>
    </interactant>
    <interactant intactId="EBI-25475856">
        <id>P0DTC9</id>
        <label>N</label>
    </interactant>
    <organismsDiffer>true</organismsDiffer>
    <experiments>5</experiments>
</comment>
<comment type="subcellular location">
    <subcellularLocation>
        <location>Nucleus</location>
    </subcellularLocation>
</comment>
<keyword id="KW-0156">Chromatin regulator</keyword>
<keyword id="KW-0903">Direct protein sequencing</keyword>
<keyword id="KW-0227">DNA damage</keyword>
<keyword id="KW-0234">DNA repair</keyword>
<keyword id="KW-0341">Growth regulation</keyword>
<keyword id="KW-0539">Nucleus</keyword>
<keyword id="KW-0597">Phosphoprotein</keyword>
<keyword id="KW-1267">Proteomics identification</keyword>
<keyword id="KW-1185">Reference proteome</keyword>
<keyword id="KW-0804">Transcription</keyword>
<keyword id="KW-0805">Transcription regulation</keyword>
<evidence type="ECO:0000255" key="1">
    <source>
        <dbReference type="PROSITE-ProRule" id="PRU00972"/>
    </source>
</evidence>
<evidence type="ECO:0000256" key="2">
    <source>
        <dbReference type="SAM" id="MobiDB-lite"/>
    </source>
</evidence>
<evidence type="ECO:0000269" key="3">
    <source>
    </source>
</evidence>
<evidence type="ECO:0000269" key="4">
    <source>
    </source>
</evidence>
<evidence type="ECO:0000269" key="5">
    <source>
    </source>
</evidence>
<evidence type="ECO:0007744" key="6">
    <source>
    </source>
</evidence>
<evidence type="ECO:0007744" key="7">
    <source>
    </source>
</evidence>
<name>MO4L2_HUMAN</name>
<gene>
    <name type="primary">MORF4L2</name>
    <name type="synonym">KIAA0026</name>
    <name type="synonym">MRGX</name>
</gene>
<proteinExistence type="evidence at protein level"/>
<reference key="1">
    <citation type="journal article" date="1999" name="Mol. Cell. Biol.">
        <title>Identification of a gene that reverses the immortal phenotype of a subset of cells and is a member of a novel family of transcription factor-like genes.</title>
        <authorList>
            <person name="Bertram M.J."/>
            <person name="Berube N.G."/>
            <person name="Hang-Swanson X."/>
            <person name="Ran Q."/>
            <person name="Leung J.K."/>
            <person name="Bryce S."/>
            <person name="Spurgers K."/>
            <person name="Bick R.J."/>
            <person name="Baldini A."/>
            <person name="Ning Y."/>
            <person name="Clark L.J."/>
            <person name="Parkinson E.K."/>
            <person name="Barrett J.C."/>
            <person name="Smith J.R."/>
            <person name="Pereira-Smith O.M."/>
        </authorList>
    </citation>
    <scope>NUCLEOTIDE SEQUENCE [MRNA]</scope>
</reference>
<reference key="2">
    <citation type="submission" date="1999-07" db="EMBL/GenBank/DDBJ databases">
        <title>Two human homologs of the Drosophila dosage compensation gene msl-3 are located on the X chromosome.</title>
        <authorList>
            <person name="D'Esposito M."/>
            <person name="Cocchia M."/>
            <person name="Matarazzo M.R."/>
            <person name="Macmillan S."/>
            <person name="Mazzarella R."/>
        </authorList>
    </citation>
    <scope>NUCLEOTIDE SEQUENCE [MRNA]</scope>
</reference>
<reference key="3">
    <citation type="journal article" date="1994" name="DNA Res.">
        <title>Prediction of the coding sequences of unidentified human genes. I. The coding sequences of 40 new genes (KIAA0001-KIAA0040) deduced by analysis of randomly sampled cDNA clones from human immature myeloid cell line KG-1.</title>
        <authorList>
            <person name="Nomura N."/>
            <person name="Miyajima N."/>
            <person name="Sazuka T."/>
            <person name="Tanaka A."/>
            <person name="Kawarabayasi Y."/>
            <person name="Sato S."/>
            <person name="Nagase T."/>
            <person name="Seki N."/>
            <person name="Ishikawa K."/>
            <person name="Tabata S."/>
        </authorList>
    </citation>
    <scope>NUCLEOTIDE SEQUENCE [LARGE SCALE MRNA]</scope>
    <source>
        <tissue>Bone marrow</tissue>
    </source>
</reference>
<reference key="4">
    <citation type="journal article" date="2004" name="Nat. Genet.">
        <title>Complete sequencing and characterization of 21,243 full-length human cDNAs.</title>
        <authorList>
            <person name="Ota T."/>
            <person name="Suzuki Y."/>
            <person name="Nishikawa T."/>
            <person name="Otsuki T."/>
            <person name="Sugiyama T."/>
            <person name="Irie R."/>
            <person name="Wakamatsu A."/>
            <person name="Hayashi K."/>
            <person name="Sato H."/>
            <person name="Nagai K."/>
            <person name="Kimura K."/>
            <person name="Makita H."/>
            <person name="Sekine M."/>
            <person name="Obayashi M."/>
            <person name="Nishi T."/>
            <person name="Shibahara T."/>
            <person name="Tanaka T."/>
            <person name="Ishii S."/>
            <person name="Yamamoto J."/>
            <person name="Saito K."/>
            <person name="Kawai Y."/>
            <person name="Isono Y."/>
            <person name="Nakamura Y."/>
            <person name="Nagahari K."/>
            <person name="Murakami K."/>
            <person name="Yasuda T."/>
            <person name="Iwayanagi T."/>
            <person name="Wagatsuma M."/>
            <person name="Shiratori A."/>
            <person name="Sudo H."/>
            <person name="Hosoiri T."/>
            <person name="Kaku Y."/>
            <person name="Kodaira H."/>
            <person name="Kondo H."/>
            <person name="Sugawara M."/>
            <person name="Takahashi M."/>
            <person name="Kanda K."/>
            <person name="Yokoi T."/>
            <person name="Furuya T."/>
            <person name="Kikkawa E."/>
            <person name="Omura Y."/>
            <person name="Abe K."/>
            <person name="Kamihara K."/>
            <person name="Katsuta N."/>
            <person name="Sato K."/>
            <person name="Tanikawa M."/>
            <person name="Yamazaki M."/>
            <person name="Ninomiya K."/>
            <person name="Ishibashi T."/>
            <person name="Yamashita H."/>
            <person name="Murakawa K."/>
            <person name="Fujimori K."/>
            <person name="Tanai H."/>
            <person name="Kimata M."/>
            <person name="Watanabe M."/>
            <person name="Hiraoka S."/>
            <person name="Chiba Y."/>
            <person name="Ishida S."/>
            <person name="Ono Y."/>
            <person name="Takiguchi S."/>
            <person name="Watanabe S."/>
            <person name="Yosida M."/>
            <person name="Hotuta T."/>
            <person name="Kusano J."/>
            <person name="Kanehori K."/>
            <person name="Takahashi-Fujii A."/>
            <person name="Hara H."/>
            <person name="Tanase T.-O."/>
            <person name="Nomura Y."/>
            <person name="Togiya S."/>
            <person name="Komai F."/>
            <person name="Hara R."/>
            <person name="Takeuchi K."/>
            <person name="Arita M."/>
            <person name="Imose N."/>
            <person name="Musashino K."/>
            <person name="Yuuki H."/>
            <person name="Oshima A."/>
            <person name="Sasaki N."/>
            <person name="Aotsuka S."/>
            <person name="Yoshikawa Y."/>
            <person name="Matsunawa H."/>
            <person name="Ichihara T."/>
            <person name="Shiohata N."/>
            <person name="Sano S."/>
            <person name="Moriya S."/>
            <person name="Momiyama H."/>
            <person name="Satoh N."/>
            <person name="Takami S."/>
            <person name="Terashima Y."/>
            <person name="Suzuki O."/>
            <person name="Nakagawa S."/>
            <person name="Senoh A."/>
            <person name="Mizoguchi H."/>
            <person name="Goto Y."/>
            <person name="Shimizu F."/>
            <person name="Wakebe H."/>
            <person name="Hishigaki H."/>
            <person name="Watanabe T."/>
            <person name="Sugiyama A."/>
            <person name="Takemoto M."/>
            <person name="Kawakami B."/>
            <person name="Yamazaki M."/>
            <person name="Watanabe K."/>
            <person name="Kumagai A."/>
            <person name="Itakura S."/>
            <person name="Fukuzumi Y."/>
            <person name="Fujimori Y."/>
            <person name="Komiyama M."/>
            <person name="Tashiro H."/>
            <person name="Tanigami A."/>
            <person name="Fujiwara T."/>
            <person name="Ono T."/>
            <person name="Yamada K."/>
            <person name="Fujii Y."/>
            <person name="Ozaki K."/>
            <person name="Hirao M."/>
            <person name="Ohmori Y."/>
            <person name="Kawabata A."/>
            <person name="Hikiji T."/>
            <person name="Kobatake N."/>
            <person name="Inagaki H."/>
            <person name="Ikema Y."/>
            <person name="Okamoto S."/>
            <person name="Okitani R."/>
            <person name="Kawakami T."/>
            <person name="Noguchi S."/>
            <person name="Itoh T."/>
            <person name="Shigeta K."/>
            <person name="Senba T."/>
            <person name="Matsumura K."/>
            <person name="Nakajima Y."/>
            <person name="Mizuno T."/>
            <person name="Morinaga M."/>
            <person name="Sasaki M."/>
            <person name="Togashi T."/>
            <person name="Oyama M."/>
            <person name="Hata H."/>
            <person name="Watanabe M."/>
            <person name="Komatsu T."/>
            <person name="Mizushima-Sugano J."/>
            <person name="Satoh T."/>
            <person name="Shirai Y."/>
            <person name="Takahashi Y."/>
            <person name="Nakagawa K."/>
            <person name="Okumura K."/>
            <person name="Nagase T."/>
            <person name="Nomura N."/>
            <person name="Kikuchi H."/>
            <person name="Masuho Y."/>
            <person name="Yamashita R."/>
            <person name="Nakai K."/>
            <person name="Yada T."/>
            <person name="Nakamura Y."/>
            <person name="Ohara O."/>
            <person name="Isogai T."/>
            <person name="Sugano S."/>
        </authorList>
    </citation>
    <scope>NUCLEOTIDE SEQUENCE [LARGE SCALE MRNA]</scope>
</reference>
<reference key="5">
    <citation type="journal article" date="2005" name="Nature">
        <title>The DNA sequence of the human X chromosome.</title>
        <authorList>
            <person name="Ross M.T."/>
            <person name="Grafham D.V."/>
            <person name="Coffey A.J."/>
            <person name="Scherer S."/>
            <person name="McLay K."/>
            <person name="Muzny D."/>
            <person name="Platzer M."/>
            <person name="Howell G.R."/>
            <person name="Burrows C."/>
            <person name="Bird C.P."/>
            <person name="Frankish A."/>
            <person name="Lovell F.L."/>
            <person name="Howe K.L."/>
            <person name="Ashurst J.L."/>
            <person name="Fulton R.S."/>
            <person name="Sudbrak R."/>
            <person name="Wen G."/>
            <person name="Jones M.C."/>
            <person name="Hurles M.E."/>
            <person name="Andrews T.D."/>
            <person name="Scott C.E."/>
            <person name="Searle S."/>
            <person name="Ramser J."/>
            <person name="Whittaker A."/>
            <person name="Deadman R."/>
            <person name="Carter N.P."/>
            <person name="Hunt S.E."/>
            <person name="Chen R."/>
            <person name="Cree A."/>
            <person name="Gunaratne P."/>
            <person name="Havlak P."/>
            <person name="Hodgson A."/>
            <person name="Metzker M.L."/>
            <person name="Richards S."/>
            <person name="Scott G."/>
            <person name="Steffen D."/>
            <person name="Sodergren E."/>
            <person name="Wheeler D.A."/>
            <person name="Worley K.C."/>
            <person name="Ainscough R."/>
            <person name="Ambrose K.D."/>
            <person name="Ansari-Lari M.A."/>
            <person name="Aradhya S."/>
            <person name="Ashwell R.I."/>
            <person name="Babbage A.K."/>
            <person name="Bagguley C.L."/>
            <person name="Ballabio A."/>
            <person name="Banerjee R."/>
            <person name="Barker G.E."/>
            <person name="Barlow K.F."/>
            <person name="Barrett I.P."/>
            <person name="Bates K.N."/>
            <person name="Beare D.M."/>
            <person name="Beasley H."/>
            <person name="Beasley O."/>
            <person name="Beck A."/>
            <person name="Bethel G."/>
            <person name="Blechschmidt K."/>
            <person name="Brady N."/>
            <person name="Bray-Allen S."/>
            <person name="Bridgeman A.M."/>
            <person name="Brown A.J."/>
            <person name="Brown M.J."/>
            <person name="Bonnin D."/>
            <person name="Bruford E.A."/>
            <person name="Buhay C."/>
            <person name="Burch P."/>
            <person name="Burford D."/>
            <person name="Burgess J."/>
            <person name="Burrill W."/>
            <person name="Burton J."/>
            <person name="Bye J.M."/>
            <person name="Carder C."/>
            <person name="Carrel L."/>
            <person name="Chako J."/>
            <person name="Chapman J.C."/>
            <person name="Chavez D."/>
            <person name="Chen E."/>
            <person name="Chen G."/>
            <person name="Chen Y."/>
            <person name="Chen Z."/>
            <person name="Chinault C."/>
            <person name="Ciccodicola A."/>
            <person name="Clark S.Y."/>
            <person name="Clarke G."/>
            <person name="Clee C.M."/>
            <person name="Clegg S."/>
            <person name="Clerc-Blankenburg K."/>
            <person name="Clifford K."/>
            <person name="Cobley V."/>
            <person name="Cole C.G."/>
            <person name="Conquer J.S."/>
            <person name="Corby N."/>
            <person name="Connor R.E."/>
            <person name="David R."/>
            <person name="Davies J."/>
            <person name="Davis C."/>
            <person name="Davis J."/>
            <person name="Delgado O."/>
            <person name="Deshazo D."/>
            <person name="Dhami P."/>
            <person name="Ding Y."/>
            <person name="Dinh H."/>
            <person name="Dodsworth S."/>
            <person name="Draper H."/>
            <person name="Dugan-Rocha S."/>
            <person name="Dunham A."/>
            <person name="Dunn M."/>
            <person name="Durbin K.J."/>
            <person name="Dutta I."/>
            <person name="Eades T."/>
            <person name="Ellwood M."/>
            <person name="Emery-Cohen A."/>
            <person name="Errington H."/>
            <person name="Evans K.L."/>
            <person name="Faulkner L."/>
            <person name="Francis F."/>
            <person name="Frankland J."/>
            <person name="Fraser A.E."/>
            <person name="Galgoczy P."/>
            <person name="Gilbert J."/>
            <person name="Gill R."/>
            <person name="Gloeckner G."/>
            <person name="Gregory S.G."/>
            <person name="Gribble S."/>
            <person name="Griffiths C."/>
            <person name="Grocock R."/>
            <person name="Gu Y."/>
            <person name="Gwilliam R."/>
            <person name="Hamilton C."/>
            <person name="Hart E.A."/>
            <person name="Hawes A."/>
            <person name="Heath P.D."/>
            <person name="Heitmann K."/>
            <person name="Hennig S."/>
            <person name="Hernandez J."/>
            <person name="Hinzmann B."/>
            <person name="Ho S."/>
            <person name="Hoffs M."/>
            <person name="Howden P.J."/>
            <person name="Huckle E.J."/>
            <person name="Hume J."/>
            <person name="Hunt P.J."/>
            <person name="Hunt A.R."/>
            <person name="Isherwood J."/>
            <person name="Jacob L."/>
            <person name="Johnson D."/>
            <person name="Jones S."/>
            <person name="de Jong P.J."/>
            <person name="Joseph S.S."/>
            <person name="Keenan S."/>
            <person name="Kelly S."/>
            <person name="Kershaw J.K."/>
            <person name="Khan Z."/>
            <person name="Kioschis P."/>
            <person name="Klages S."/>
            <person name="Knights A.J."/>
            <person name="Kosiura A."/>
            <person name="Kovar-Smith C."/>
            <person name="Laird G.K."/>
            <person name="Langford C."/>
            <person name="Lawlor S."/>
            <person name="Leversha M."/>
            <person name="Lewis L."/>
            <person name="Liu W."/>
            <person name="Lloyd C."/>
            <person name="Lloyd D.M."/>
            <person name="Loulseged H."/>
            <person name="Loveland J.E."/>
            <person name="Lovell J.D."/>
            <person name="Lozado R."/>
            <person name="Lu J."/>
            <person name="Lyne R."/>
            <person name="Ma J."/>
            <person name="Maheshwari M."/>
            <person name="Matthews L.H."/>
            <person name="McDowall J."/>
            <person name="McLaren S."/>
            <person name="McMurray A."/>
            <person name="Meidl P."/>
            <person name="Meitinger T."/>
            <person name="Milne S."/>
            <person name="Miner G."/>
            <person name="Mistry S.L."/>
            <person name="Morgan M."/>
            <person name="Morris S."/>
            <person name="Mueller I."/>
            <person name="Mullikin J.C."/>
            <person name="Nguyen N."/>
            <person name="Nordsiek G."/>
            <person name="Nyakatura G."/>
            <person name="O'dell C.N."/>
            <person name="Okwuonu G."/>
            <person name="Palmer S."/>
            <person name="Pandian R."/>
            <person name="Parker D."/>
            <person name="Parrish J."/>
            <person name="Pasternak S."/>
            <person name="Patel D."/>
            <person name="Pearce A.V."/>
            <person name="Pearson D.M."/>
            <person name="Pelan S.E."/>
            <person name="Perez L."/>
            <person name="Porter K.M."/>
            <person name="Ramsey Y."/>
            <person name="Reichwald K."/>
            <person name="Rhodes S."/>
            <person name="Ridler K.A."/>
            <person name="Schlessinger D."/>
            <person name="Schueler M.G."/>
            <person name="Sehra H.K."/>
            <person name="Shaw-Smith C."/>
            <person name="Shen H."/>
            <person name="Sheridan E.M."/>
            <person name="Shownkeen R."/>
            <person name="Skuce C.D."/>
            <person name="Smith M.L."/>
            <person name="Sotheran E.C."/>
            <person name="Steingruber H.E."/>
            <person name="Steward C.A."/>
            <person name="Storey R."/>
            <person name="Swann R.M."/>
            <person name="Swarbreck D."/>
            <person name="Tabor P.E."/>
            <person name="Taudien S."/>
            <person name="Taylor T."/>
            <person name="Teague B."/>
            <person name="Thomas K."/>
            <person name="Thorpe A."/>
            <person name="Timms K."/>
            <person name="Tracey A."/>
            <person name="Trevanion S."/>
            <person name="Tromans A.C."/>
            <person name="d'Urso M."/>
            <person name="Verduzco D."/>
            <person name="Villasana D."/>
            <person name="Waldron L."/>
            <person name="Wall M."/>
            <person name="Wang Q."/>
            <person name="Warren J."/>
            <person name="Warry G.L."/>
            <person name="Wei X."/>
            <person name="West A."/>
            <person name="Whitehead S.L."/>
            <person name="Whiteley M.N."/>
            <person name="Wilkinson J.E."/>
            <person name="Willey D.L."/>
            <person name="Williams G."/>
            <person name="Williams L."/>
            <person name="Williamson A."/>
            <person name="Williamson H."/>
            <person name="Wilming L."/>
            <person name="Woodmansey R.L."/>
            <person name="Wray P.W."/>
            <person name="Yen J."/>
            <person name="Zhang J."/>
            <person name="Zhou J."/>
            <person name="Zoghbi H."/>
            <person name="Zorilla S."/>
            <person name="Buck D."/>
            <person name="Reinhardt R."/>
            <person name="Poustka A."/>
            <person name="Rosenthal A."/>
            <person name="Lehrach H."/>
            <person name="Meindl A."/>
            <person name="Minx P.J."/>
            <person name="Hillier L.W."/>
            <person name="Willard H.F."/>
            <person name="Wilson R.K."/>
            <person name="Waterston R.H."/>
            <person name="Rice C.M."/>
            <person name="Vaudin M."/>
            <person name="Coulson A."/>
            <person name="Nelson D.L."/>
            <person name="Weinstock G."/>
            <person name="Sulston J.E."/>
            <person name="Durbin R.M."/>
            <person name="Hubbard T."/>
            <person name="Gibbs R.A."/>
            <person name="Beck S."/>
            <person name="Rogers J."/>
            <person name="Bentley D.R."/>
        </authorList>
    </citation>
    <scope>NUCLEOTIDE SEQUENCE [LARGE SCALE GENOMIC DNA]</scope>
</reference>
<reference key="6">
    <citation type="submission" date="2005-09" db="EMBL/GenBank/DDBJ databases">
        <authorList>
            <person name="Mural R.J."/>
            <person name="Istrail S."/>
            <person name="Sutton G.G."/>
            <person name="Florea L."/>
            <person name="Halpern A.L."/>
            <person name="Mobarry C.M."/>
            <person name="Lippert R."/>
            <person name="Walenz B."/>
            <person name="Shatkay H."/>
            <person name="Dew I."/>
            <person name="Miller J.R."/>
            <person name="Flanigan M.J."/>
            <person name="Edwards N.J."/>
            <person name="Bolanos R."/>
            <person name="Fasulo D."/>
            <person name="Halldorsson B.V."/>
            <person name="Hannenhalli S."/>
            <person name="Turner R."/>
            <person name="Yooseph S."/>
            <person name="Lu F."/>
            <person name="Nusskern D.R."/>
            <person name="Shue B.C."/>
            <person name="Zheng X.H."/>
            <person name="Zhong F."/>
            <person name="Delcher A.L."/>
            <person name="Huson D.H."/>
            <person name="Kravitz S.A."/>
            <person name="Mouchard L."/>
            <person name="Reinert K."/>
            <person name="Remington K.A."/>
            <person name="Clark A.G."/>
            <person name="Waterman M.S."/>
            <person name="Eichler E.E."/>
            <person name="Adams M.D."/>
            <person name="Hunkapiller M.W."/>
            <person name="Myers E.W."/>
            <person name="Venter J.C."/>
        </authorList>
    </citation>
    <scope>NUCLEOTIDE SEQUENCE [LARGE SCALE GENOMIC DNA]</scope>
</reference>
<reference key="7">
    <citation type="journal article" date="2004" name="Genome Res.">
        <title>The status, quality, and expansion of the NIH full-length cDNA project: the Mammalian Gene Collection (MGC).</title>
        <authorList>
            <consortium name="The MGC Project Team"/>
        </authorList>
    </citation>
    <scope>NUCLEOTIDE SEQUENCE [LARGE SCALE MRNA]</scope>
    <source>
        <tissue>Pancreas</tissue>
        <tissue>Placenta</tissue>
    </source>
</reference>
<reference key="8">
    <citation type="submission" date="2000-11" db="EMBL/GenBank/DDBJ databases">
        <title>Mortality factor related gene X 102 5'.</title>
        <authorList>
            <person name="Myokai F."/>
            <person name="Oyama M."/>
        </authorList>
    </citation>
    <scope>NUCLEOTIDE SEQUENCE [MRNA] OF 1-16</scope>
</reference>
<reference key="9">
    <citation type="journal article" date="2003" name="J. Biol. Chem.">
        <title>Identification of new subunits of the multiprotein mammalian TRRAP/TIP60-containing histone acetyltransferase complex.</title>
        <authorList>
            <person name="Cai Y."/>
            <person name="Jin J."/>
            <person name="Tomomori-Sato C."/>
            <person name="Sato S."/>
            <person name="Sorokina I."/>
            <person name="Parmely T.J."/>
            <person name="Conaway R.C."/>
            <person name="Conaway J.W."/>
        </authorList>
    </citation>
    <scope>PROTEIN SEQUENCE OF 12-22; 82-99; 105-116; 154-166; 176-187; 188-201; 235-247 AND 266-277</scope>
    <scope>IDENTIFICATION IN NUA4 COMPLEX</scope>
</reference>
<reference key="10">
    <citation type="journal article" date="2002" name="Mol. Cell. Biol.">
        <title>Role for the mortality factors MORF4, MRGX, and MRG15 in transcriptional repression via associations with Pf1, mSin3A, and transducin-like enhancer of Split.</title>
        <authorList>
            <person name="Yochum G.S."/>
            <person name="Ayer D.E."/>
        </authorList>
    </citation>
    <scope>INTERACTION WITH SIN3A AND TLE FAMILY MEMBERS</scope>
</reference>
<reference key="11">
    <citation type="journal article" date="2003" name="J. Biol. Chem.">
        <title>MRGX is a novel transcriptional regulator that exhibits activation or repression of the B-myb promoter in a cell type-dependent manner.</title>
        <authorList>
            <person name="Tominaga K."/>
            <person name="Leung J.K."/>
            <person name="Rookard P."/>
            <person name="Echigo J."/>
            <person name="Smith J.R."/>
            <person name="Pereira-Smith O.M."/>
        </authorList>
    </citation>
    <scope>INTERACTION WITH MRFAP1 AND RB1</scope>
    <scope>MUTAGENESIS OF 132-TRP--ASP-136 AND LEU-263</scope>
</reference>
<reference key="12">
    <citation type="journal article" date="2008" name="Proc. Natl. Acad. Sci. U.S.A.">
        <title>A quantitative atlas of mitotic phosphorylation.</title>
        <authorList>
            <person name="Dephoure N."/>
            <person name="Zhou C."/>
            <person name="Villen J."/>
            <person name="Beausoleil S.A."/>
            <person name="Bakalarski C.E."/>
            <person name="Elledge S.J."/>
            <person name="Gygi S.P."/>
        </authorList>
    </citation>
    <scope>PHOSPHORYLATION [LARGE SCALE ANALYSIS] AT SER-71</scope>
    <scope>IDENTIFICATION BY MASS SPECTROMETRY [LARGE SCALE ANALYSIS]</scope>
    <source>
        <tissue>Cervix carcinoma</tissue>
    </source>
</reference>
<reference key="13">
    <citation type="journal article" date="2011" name="BMC Syst. Biol.">
        <title>Initial characterization of the human central proteome.</title>
        <authorList>
            <person name="Burkard T.R."/>
            <person name="Planyavsky M."/>
            <person name="Kaupe I."/>
            <person name="Breitwieser F.P."/>
            <person name="Buerckstuemmer T."/>
            <person name="Bennett K.L."/>
            <person name="Superti-Furga G."/>
            <person name="Colinge J."/>
        </authorList>
    </citation>
    <scope>IDENTIFICATION BY MASS SPECTROMETRY [LARGE SCALE ANALYSIS]</scope>
</reference>
<reference key="14">
    <citation type="journal article" date="2013" name="J. Proteome Res.">
        <title>Toward a comprehensive characterization of a human cancer cell phosphoproteome.</title>
        <authorList>
            <person name="Zhou H."/>
            <person name="Di Palma S."/>
            <person name="Preisinger C."/>
            <person name="Peng M."/>
            <person name="Polat A.N."/>
            <person name="Heck A.J."/>
            <person name="Mohammed S."/>
        </authorList>
    </citation>
    <scope>PHOSPHORYLATION [LARGE SCALE ANALYSIS] AT SER-71</scope>
    <scope>IDENTIFICATION BY MASS SPECTROMETRY [LARGE SCALE ANALYSIS]</scope>
    <source>
        <tissue>Erythroleukemia</tissue>
    </source>
</reference>
<protein>
    <recommendedName>
        <fullName>Mortality factor 4-like protein 2</fullName>
    </recommendedName>
    <alternativeName>
        <fullName>MORF-related gene X protein</fullName>
    </alternativeName>
    <alternativeName>
        <fullName>Protein MSL3-2</fullName>
    </alternativeName>
    <alternativeName>
        <fullName>Transcription factor-like protein MRGX</fullName>
    </alternativeName>
</protein>